<reference key="1">
    <citation type="submission" date="2008-10" db="EMBL/GenBank/DDBJ databases">
        <title>Genome sequence of Bacillus cereus G9842.</title>
        <authorList>
            <person name="Dodson R.J."/>
            <person name="Durkin A.S."/>
            <person name="Rosovitz M.J."/>
            <person name="Rasko D.A."/>
            <person name="Hoffmaster A."/>
            <person name="Ravel J."/>
            <person name="Sutton G."/>
        </authorList>
    </citation>
    <scope>NUCLEOTIDE SEQUENCE [LARGE SCALE GENOMIC DNA]</scope>
    <source>
        <strain>G9842</strain>
    </source>
</reference>
<comment type="function">
    <text evidence="1">ATPase subunit of a proteasome-like degradation complex; this subunit has chaperone activity. The binding of ATP and its subsequent hydrolysis by HslU are essential for unfolding of protein substrates subsequently hydrolyzed by HslV. HslU recognizes the N-terminal part of its protein substrates and unfolds these before they are guided to HslV for hydrolysis.</text>
</comment>
<comment type="subunit">
    <text evidence="1">A double ring-shaped homohexamer of HslV is capped on each side by a ring-shaped HslU homohexamer. The assembly of the HslU/HslV complex is dependent on binding of ATP.</text>
</comment>
<comment type="subcellular location">
    <subcellularLocation>
        <location evidence="1">Cytoplasm</location>
    </subcellularLocation>
</comment>
<comment type="similarity">
    <text evidence="1">Belongs to the ClpX chaperone family. HslU subfamily.</text>
</comment>
<protein>
    <recommendedName>
        <fullName evidence="1">ATP-dependent protease ATPase subunit HslU</fullName>
    </recommendedName>
    <alternativeName>
        <fullName evidence="1">Unfoldase HslU</fullName>
    </alternativeName>
</protein>
<accession>B7IUI8</accession>
<sequence length="463" mass="52114">MHLHFTPRQIVEKLDQYIIGQKDAKKAVAVALRNRYRRSKLAENLRDEIAPKNILMIGPTGVGKTEVARRMAKLVGAPFIKVEATKFTEVGYVGRDVESMVRDLVETSVRIVKEEMVVKVQDKAEEQANQRLVEILVPSPEKQSGFKNPLEMLFGGAQNSSQTSDTQEDGEIEKKRQDVERKLAAGLLEDEIVSIEVTEQQSSMFDMLQGTGMEQMGMNFQDALGSFMPKKTKKRKLSVKEARKLLTNEEAQRLIDMDEVTQEAVYRAEQLGIIFIDEIDKIAGKQSNSVDVSREGVQRDILPIVEGSNVATKYGSVKTDYILFVAAGAFHMSKPSDLIPELQGRFPIRVELTKLSTDDFVKILIEPDNALIKQYMALLATEGIEIEFSDEAIRKIAEIAYQVNQDTDNIGARRLHTIMEKLLEDLSFEASEITLEKITITPQYVEEKLASIAKNKDVSQFIL</sequence>
<evidence type="ECO:0000255" key="1">
    <source>
        <dbReference type="HAMAP-Rule" id="MF_00249"/>
    </source>
</evidence>
<evidence type="ECO:0000256" key="2">
    <source>
        <dbReference type="SAM" id="MobiDB-lite"/>
    </source>
</evidence>
<dbReference type="EMBL" id="CP001186">
    <property type="protein sequence ID" value="ACK97411.1"/>
    <property type="molecule type" value="Genomic_DNA"/>
</dbReference>
<dbReference type="RefSeq" id="WP_000550083.1">
    <property type="nucleotide sequence ID" value="NC_011772.1"/>
</dbReference>
<dbReference type="SMR" id="B7IUI8"/>
<dbReference type="KEGG" id="bcg:BCG9842_B1316"/>
<dbReference type="HOGENOM" id="CLU_033123_0_0_9"/>
<dbReference type="Proteomes" id="UP000006744">
    <property type="component" value="Chromosome"/>
</dbReference>
<dbReference type="GO" id="GO:0009376">
    <property type="term" value="C:HslUV protease complex"/>
    <property type="evidence" value="ECO:0007669"/>
    <property type="project" value="UniProtKB-UniRule"/>
</dbReference>
<dbReference type="GO" id="GO:0005524">
    <property type="term" value="F:ATP binding"/>
    <property type="evidence" value="ECO:0007669"/>
    <property type="project" value="UniProtKB-UniRule"/>
</dbReference>
<dbReference type="GO" id="GO:0016887">
    <property type="term" value="F:ATP hydrolysis activity"/>
    <property type="evidence" value="ECO:0007669"/>
    <property type="project" value="InterPro"/>
</dbReference>
<dbReference type="GO" id="GO:0008233">
    <property type="term" value="F:peptidase activity"/>
    <property type="evidence" value="ECO:0007669"/>
    <property type="project" value="InterPro"/>
</dbReference>
<dbReference type="GO" id="GO:0036402">
    <property type="term" value="F:proteasome-activating activity"/>
    <property type="evidence" value="ECO:0007669"/>
    <property type="project" value="UniProtKB-UniRule"/>
</dbReference>
<dbReference type="GO" id="GO:0043335">
    <property type="term" value="P:protein unfolding"/>
    <property type="evidence" value="ECO:0007669"/>
    <property type="project" value="UniProtKB-UniRule"/>
</dbReference>
<dbReference type="GO" id="GO:0051603">
    <property type="term" value="P:proteolysis involved in protein catabolic process"/>
    <property type="evidence" value="ECO:0007669"/>
    <property type="project" value="TreeGrafter"/>
</dbReference>
<dbReference type="CDD" id="cd19498">
    <property type="entry name" value="RecA-like_HslU"/>
    <property type="match status" value="1"/>
</dbReference>
<dbReference type="FunFam" id="3.40.50.300:FF:000220">
    <property type="entry name" value="ATP-dependent protease ATPase subunit HslU"/>
    <property type="match status" value="1"/>
</dbReference>
<dbReference type="Gene3D" id="1.10.8.60">
    <property type="match status" value="1"/>
</dbReference>
<dbReference type="Gene3D" id="3.40.50.300">
    <property type="entry name" value="P-loop containing nucleotide triphosphate hydrolases"/>
    <property type="match status" value="2"/>
</dbReference>
<dbReference type="HAMAP" id="MF_00249">
    <property type="entry name" value="HslU"/>
    <property type="match status" value="1"/>
</dbReference>
<dbReference type="InterPro" id="IPR003593">
    <property type="entry name" value="AAA+_ATPase"/>
</dbReference>
<dbReference type="InterPro" id="IPR050052">
    <property type="entry name" value="ATP-dep_Clp_protease_ClpX"/>
</dbReference>
<dbReference type="InterPro" id="IPR003959">
    <property type="entry name" value="ATPase_AAA_core"/>
</dbReference>
<dbReference type="InterPro" id="IPR019489">
    <property type="entry name" value="Clp_ATPase_C"/>
</dbReference>
<dbReference type="InterPro" id="IPR004491">
    <property type="entry name" value="HslU"/>
</dbReference>
<dbReference type="InterPro" id="IPR027417">
    <property type="entry name" value="P-loop_NTPase"/>
</dbReference>
<dbReference type="NCBIfam" id="TIGR00390">
    <property type="entry name" value="hslU"/>
    <property type="match status" value="1"/>
</dbReference>
<dbReference type="NCBIfam" id="NF003544">
    <property type="entry name" value="PRK05201.1"/>
    <property type="match status" value="1"/>
</dbReference>
<dbReference type="PANTHER" id="PTHR48102">
    <property type="entry name" value="ATP-DEPENDENT CLP PROTEASE ATP-BINDING SUBUNIT CLPX-LIKE, MITOCHONDRIAL-RELATED"/>
    <property type="match status" value="1"/>
</dbReference>
<dbReference type="PANTHER" id="PTHR48102:SF3">
    <property type="entry name" value="ATP-DEPENDENT PROTEASE ATPASE SUBUNIT HSLU"/>
    <property type="match status" value="1"/>
</dbReference>
<dbReference type="Pfam" id="PF00004">
    <property type="entry name" value="AAA"/>
    <property type="match status" value="1"/>
</dbReference>
<dbReference type="Pfam" id="PF07724">
    <property type="entry name" value="AAA_2"/>
    <property type="match status" value="1"/>
</dbReference>
<dbReference type="Pfam" id="PF10431">
    <property type="entry name" value="ClpB_D2-small"/>
    <property type="match status" value="1"/>
</dbReference>
<dbReference type="SMART" id="SM00382">
    <property type="entry name" value="AAA"/>
    <property type="match status" value="1"/>
</dbReference>
<dbReference type="SMART" id="SM01086">
    <property type="entry name" value="ClpB_D2-small"/>
    <property type="match status" value="1"/>
</dbReference>
<dbReference type="SUPFAM" id="SSF52540">
    <property type="entry name" value="P-loop containing nucleoside triphosphate hydrolases"/>
    <property type="match status" value="1"/>
</dbReference>
<proteinExistence type="inferred from homology"/>
<organism>
    <name type="scientific">Bacillus cereus (strain G9842)</name>
    <dbReference type="NCBI Taxonomy" id="405531"/>
    <lineage>
        <taxon>Bacteria</taxon>
        <taxon>Bacillati</taxon>
        <taxon>Bacillota</taxon>
        <taxon>Bacilli</taxon>
        <taxon>Bacillales</taxon>
        <taxon>Bacillaceae</taxon>
        <taxon>Bacillus</taxon>
        <taxon>Bacillus cereus group</taxon>
    </lineage>
</organism>
<keyword id="KW-0067">ATP-binding</keyword>
<keyword id="KW-0143">Chaperone</keyword>
<keyword id="KW-0963">Cytoplasm</keyword>
<keyword id="KW-0547">Nucleotide-binding</keyword>
<name>HSLU_BACC2</name>
<feature type="chain" id="PRO_1000189694" description="ATP-dependent protease ATPase subunit HslU">
    <location>
        <begin position="1"/>
        <end position="463"/>
    </location>
</feature>
<feature type="region of interest" description="Disordered" evidence="2">
    <location>
        <begin position="154"/>
        <end position="174"/>
    </location>
</feature>
<feature type="binding site" evidence="1">
    <location>
        <position position="19"/>
    </location>
    <ligand>
        <name>ATP</name>
        <dbReference type="ChEBI" id="CHEBI:30616"/>
    </ligand>
</feature>
<feature type="binding site" evidence="1">
    <location>
        <begin position="61"/>
        <end position="66"/>
    </location>
    <ligand>
        <name>ATP</name>
        <dbReference type="ChEBI" id="CHEBI:30616"/>
    </ligand>
</feature>
<feature type="binding site" evidence="1">
    <location>
        <position position="277"/>
    </location>
    <ligand>
        <name>ATP</name>
        <dbReference type="ChEBI" id="CHEBI:30616"/>
    </ligand>
</feature>
<feature type="binding site" evidence="1">
    <location>
        <position position="341"/>
    </location>
    <ligand>
        <name>ATP</name>
        <dbReference type="ChEBI" id="CHEBI:30616"/>
    </ligand>
</feature>
<feature type="binding site" evidence="1">
    <location>
        <position position="413"/>
    </location>
    <ligand>
        <name>ATP</name>
        <dbReference type="ChEBI" id="CHEBI:30616"/>
    </ligand>
</feature>
<gene>
    <name evidence="1" type="primary">hslU</name>
    <name type="ordered locus">BCG9842_B1316</name>
</gene>